<dbReference type="EC" id="7.4.2.8" evidence="1"/>
<dbReference type="EMBL" id="CR954253">
    <property type="protein sequence ID" value="CAI97437.1"/>
    <property type="molecule type" value="Genomic_DNA"/>
</dbReference>
<dbReference type="RefSeq" id="WP_003622687.1">
    <property type="nucleotide sequence ID" value="NZ_JQAV01000001.1"/>
</dbReference>
<dbReference type="SMR" id="Q1GB45"/>
<dbReference type="STRING" id="390333.Ldb0607"/>
<dbReference type="KEGG" id="ldb:Ldb0607"/>
<dbReference type="PATRIC" id="fig|390333.13.peg.190"/>
<dbReference type="eggNOG" id="COG0653">
    <property type="taxonomic scope" value="Bacteria"/>
</dbReference>
<dbReference type="HOGENOM" id="CLU_005314_3_2_9"/>
<dbReference type="BioCyc" id="LDEL390333:LDB_RS02625-MONOMER"/>
<dbReference type="Proteomes" id="UP000001259">
    <property type="component" value="Chromosome"/>
</dbReference>
<dbReference type="GO" id="GO:0031522">
    <property type="term" value="C:cell envelope Sec protein transport complex"/>
    <property type="evidence" value="ECO:0007669"/>
    <property type="project" value="TreeGrafter"/>
</dbReference>
<dbReference type="GO" id="GO:0005829">
    <property type="term" value="C:cytosol"/>
    <property type="evidence" value="ECO:0007669"/>
    <property type="project" value="TreeGrafter"/>
</dbReference>
<dbReference type="GO" id="GO:0005886">
    <property type="term" value="C:plasma membrane"/>
    <property type="evidence" value="ECO:0007669"/>
    <property type="project" value="UniProtKB-SubCell"/>
</dbReference>
<dbReference type="GO" id="GO:0005524">
    <property type="term" value="F:ATP binding"/>
    <property type="evidence" value="ECO:0007669"/>
    <property type="project" value="UniProtKB-UniRule"/>
</dbReference>
<dbReference type="GO" id="GO:0008564">
    <property type="term" value="F:protein-exporting ATPase activity"/>
    <property type="evidence" value="ECO:0007669"/>
    <property type="project" value="UniProtKB-EC"/>
</dbReference>
<dbReference type="GO" id="GO:0065002">
    <property type="term" value="P:intracellular protein transmembrane transport"/>
    <property type="evidence" value="ECO:0007669"/>
    <property type="project" value="UniProtKB-UniRule"/>
</dbReference>
<dbReference type="GO" id="GO:0017038">
    <property type="term" value="P:protein import"/>
    <property type="evidence" value="ECO:0007669"/>
    <property type="project" value="InterPro"/>
</dbReference>
<dbReference type="GO" id="GO:0006605">
    <property type="term" value="P:protein targeting"/>
    <property type="evidence" value="ECO:0007669"/>
    <property type="project" value="UniProtKB-UniRule"/>
</dbReference>
<dbReference type="GO" id="GO:0043952">
    <property type="term" value="P:protein transport by the Sec complex"/>
    <property type="evidence" value="ECO:0007669"/>
    <property type="project" value="TreeGrafter"/>
</dbReference>
<dbReference type="CDD" id="cd17928">
    <property type="entry name" value="DEXDc_SecA"/>
    <property type="match status" value="1"/>
</dbReference>
<dbReference type="CDD" id="cd18803">
    <property type="entry name" value="SF2_C_secA"/>
    <property type="match status" value="1"/>
</dbReference>
<dbReference type="FunFam" id="3.40.50.300:FF:000429">
    <property type="entry name" value="Preprotein translocase subunit SecA"/>
    <property type="match status" value="1"/>
</dbReference>
<dbReference type="FunFam" id="3.90.1440.10:FF:000001">
    <property type="entry name" value="Preprotein translocase subunit SecA"/>
    <property type="match status" value="1"/>
</dbReference>
<dbReference type="Gene3D" id="1.10.3060.10">
    <property type="entry name" value="Helical scaffold and wing domains of SecA"/>
    <property type="match status" value="1"/>
</dbReference>
<dbReference type="Gene3D" id="3.40.50.300">
    <property type="entry name" value="P-loop containing nucleotide triphosphate hydrolases"/>
    <property type="match status" value="3"/>
</dbReference>
<dbReference type="Gene3D" id="3.90.1440.10">
    <property type="entry name" value="SecA, preprotein cross-linking domain"/>
    <property type="match status" value="1"/>
</dbReference>
<dbReference type="HAMAP" id="MF_01382">
    <property type="entry name" value="SecA"/>
    <property type="match status" value="1"/>
</dbReference>
<dbReference type="InterPro" id="IPR014001">
    <property type="entry name" value="Helicase_ATP-bd"/>
</dbReference>
<dbReference type="InterPro" id="IPR001650">
    <property type="entry name" value="Helicase_C-like"/>
</dbReference>
<dbReference type="InterPro" id="IPR027417">
    <property type="entry name" value="P-loop_NTPase"/>
</dbReference>
<dbReference type="InterPro" id="IPR000185">
    <property type="entry name" value="SecA"/>
</dbReference>
<dbReference type="InterPro" id="IPR020937">
    <property type="entry name" value="SecA_CS"/>
</dbReference>
<dbReference type="InterPro" id="IPR011115">
    <property type="entry name" value="SecA_DEAD"/>
</dbReference>
<dbReference type="InterPro" id="IPR014018">
    <property type="entry name" value="SecA_motor_DEAD"/>
</dbReference>
<dbReference type="InterPro" id="IPR011130">
    <property type="entry name" value="SecA_preprotein_X-link_dom"/>
</dbReference>
<dbReference type="InterPro" id="IPR044722">
    <property type="entry name" value="SecA_SF2_C"/>
</dbReference>
<dbReference type="InterPro" id="IPR011116">
    <property type="entry name" value="SecA_Wing/Scaffold"/>
</dbReference>
<dbReference type="InterPro" id="IPR036266">
    <property type="entry name" value="SecA_Wing/Scaffold_sf"/>
</dbReference>
<dbReference type="InterPro" id="IPR036670">
    <property type="entry name" value="SecA_X-link_sf"/>
</dbReference>
<dbReference type="NCBIfam" id="NF006630">
    <property type="entry name" value="PRK09200.1"/>
    <property type="match status" value="1"/>
</dbReference>
<dbReference type="NCBIfam" id="NF009538">
    <property type="entry name" value="PRK12904.1"/>
    <property type="match status" value="1"/>
</dbReference>
<dbReference type="NCBIfam" id="TIGR00963">
    <property type="entry name" value="secA"/>
    <property type="match status" value="1"/>
</dbReference>
<dbReference type="PANTHER" id="PTHR30612:SF0">
    <property type="entry name" value="CHLOROPLAST PROTEIN-TRANSPORTING ATPASE"/>
    <property type="match status" value="1"/>
</dbReference>
<dbReference type="PANTHER" id="PTHR30612">
    <property type="entry name" value="SECA INNER MEMBRANE COMPONENT OF SEC PROTEIN SECRETION SYSTEM"/>
    <property type="match status" value="1"/>
</dbReference>
<dbReference type="Pfam" id="PF21090">
    <property type="entry name" value="P-loop_SecA"/>
    <property type="match status" value="2"/>
</dbReference>
<dbReference type="Pfam" id="PF07517">
    <property type="entry name" value="SecA_DEAD"/>
    <property type="match status" value="1"/>
</dbReference>
<dbReference type="Pfam" id="PF01043">
    <property type="entry name" value="SecA_PP_bind"/>
    <property type="match status" value="1"/>
</dbReference>
<dbReference type="Pfam" id="PF07516">
    <property type="entry name" value="SecA_SW"/>
    <property type="match status" value="1"/>
</dbReference>
<dbReference type="PRINTS" id="PR00906">
    <property type="entry name" value="SECA"/>
</dbReference>
<dbReference type="SMART" id="SM00957">
    <property type="entry name" value="SecA_DEAD"/>
    <property type="match status" value="1"/>
</dbReference>
<dbReference type="SMART" id="SM00958">
    <property type="entry name" value="SecA_PP_bind"/>
    <property type="match status" value="1"/>
</dbReference>
<dbReference type="SUPFAM" id="SSF81886">
    <property type="entry name" value="Helical scaffold and wing domains of SecA"/>
    <property type="match status" value="1"/>
</dbReference>
<dbReference type="SUPFAM" id="SSF52540">
    <property type="entry name" value="P-loop containing nucleoside triphosphate hydrolases"/>
    <property type="match status" value="2"/>
</dbReference>
<dbReference type="SUPFAM" id="SSF81767">
    <property type="entry name" value="Pre-protein crosslinking domain of SecA"/>
    <property type="match status" value="1"/>
</dbReference>
<dbReference type="PROSITE" id="PS01312">
    <property type="entry name" value="SECA"/>
    <property type="match status" value="1"/>
</dbReference>
<dbReference type="PROSITE" id="PS51196">
    <property type="entry name" value="SECA_MOTOR_DEAD"/>
    <property type="match status" value="1"/>
</dbReference>
<protein>
    <recommendedName>
        <fullName evidence="1">Protein translocase subunit SecA</fullName>
        <ecNumber evidence="1">7.4.2.8</ecNumber>
    </recommendedName>
</protein>
<feature type="chain" id="PRO_1000073477" description="Protein translocase subunit SecA">
    <location>
        <begin position="1"/>
        <end position="800"/>
    </location>
</feature>
<feature type="binding site" evidence="1">
    <location>
        <position position="85"/>
    </location>
    <ligand>
        <name>ATP</name>
        <dbReference type="ChEBI" id="CHEBI:30616"/>
    </ligand>
</feature>
<feature type="binding site" evidence="1">
    <location>
        <begin position="103"/>
        <end position="107"/>
    </location>
    <ligand>
        <name>ATP</name>
        <dbReference type="ChEBI" id="CHEBI:30616"/>
    </ligand>
</feature>
<feature type="binding site" evidence="1">
    <location>
        <position position="504"/>
    </location>
    <ligand>
        <name>ATP</name>
        <dbReference type="ChEBI" id="CHEBI:30616"/>
    </ligand>
</feature>
<keyword id="KW-0067">ATP-binding</keyword>
<keyword id="KW-1003">Cell membrane</keyword>
<keyword id="KW-0963">Cytoplasm</keyword>
<keyword id="KW-0472">Membrane</keyword>
<keyword id="KW-0547">Nucleotide-binding</keyword>
<keyword id="KW-0653">Protein transport</keyword>
<keyword id="KW-1185">Reference proteome</keyword>
<keyword id="KW-1278">Translocase</keyword>
<keyword id="KW-0811">Translocation</keyword>
<keyword id="KW-0813">Transport</keyword>
<organism>
    <name type="scientific">Lactobacillus delbrueckii subsp. bulgaricus (strain ATCC 11842 / DSM 20081 / BCRC 10696 / JCM 1002 / NBRC 13953 / NCIMB 11778 / NCTC 12712 / WDCM 00102 / Lb 14)</name>
    <dbReference type="NCBI Taxonomy" id="390333"/>
    <lineage>
        <taxon>Bacteria</taxon>
        <taxon>Bacillati</taxon>
        <taxon>Bacillota</taxon>
        <taxon>Bacilli</taxon>
        <taxon>Lactobacillales</taxon>
        <taxon>Lactobacillaceae</taxon>
        <taxon>Lactobacillus</taxon>
    </lineage>
</organism>
<sequence>MANILKKLYNADKRELKRFEKIADQVESYADQMAALSDEELQAKTPEFRSRIEKGESLDDLLPEAFAVSREASKRVLGLYPFRVQILGGIALHRGNIAEMMTGEGKTLTATMPVYLNALSGKGVHVVTVNEYLSSRDETEMGQLYRWLGLTVGLNVSTMSPEEKRKAYACDVTYSTNSELGFDYLRDNMVVYKEQMVQRPLNYAIIDEVDSILIDEARTPLIISGEAEQANADYVRADRFVKKLVEDKSDNDADDDEDHGDYKIDWPTKTISLTRTGIQKACDHFGLKNLYDVENQKLVHHIDQALRANYIMLKDIDYVVQDGEVLIVDSFTGRVMEGRRFSDGLHQAIEAKEGVKIQEESQTQATITYQNYFRMYQKLSGMTGTAKTEEEEFREIYNMEVITIPTNRPVIRQDMPDLLYPTLDSKFKAVVDEIKERHAKGQPILVGTVSIESSERLSHMLDKEHIPHAVLNAKNHAKEAAIIMNAGQRGAVTIATNMAGRGTDIKLGPGVKELGGLAVIGTERHESRRIDNQLRGRSGRQGDPGYTRFYLSLEDDLMKRFGGDRVKDFLDRLSDNDDDKVIESRLITRQVESAQKRVEGNNYDTRKQTLQYDDVMRIQREIIYKERMQVIDEQQSLKSVLMPMIHRTIDHQVDMFTQGDRSTWRLDSLRDFIVSSLASEEYVDSEIDFKTFTPDALKQQLYQLVEDNYQEKEAALADPEQMLEFEKVVILRVVDEHWTNHIDAMDQLRQSIGLRGYGQLNPLVEYQDSGYNMFEEMISDIEFDVTRLFMKAQIRNNLSR</sequence>
<reference key="1">
    <citation type="journal article" date="2006" name="Proc. Natl. Acad. Sci. U.S.A.">
        <title>The complete genome sequence of Lactobacillus bulgaricus reveals extensive and ongoing reductive evolution.</title>
        <authorList>
            <person name="van de Guchte M."/>
            <person name="Penaud S."/>
            <person name="Grimaldi C."/>
            <person name="Barbe V."/>
            <person name="Bryson K."/>
            <person name="Nicolas P."/>
            <person name="Robert C."/>
            <person name="Oztas S."/>
            <person name="Mangenot S."/>
            <person name="Couloux A."/>
            <person name="Loux V."/>
            <person name="Dervyn R."/>
            <person name="Bossy R."/>
            <person name="Bolotin A."/>
            <person name="Batto J.-M."/>
            <person name="Walunas T."/>
            <person name="Gibrat J.-F."/>
            <person name="Bessieres P."/>
            <person name="Weissenbach J."/>
            <person name="Ehrlich S.D."/>
            <person name="Maguin E."/>
        </authorList>
    </citation>
    <scope>NUCLEOTIDE SEQUENCE [LARGE SCALE GENOMIC DNA]</scope>
    <source>
        <strain>ATCC 11842 / DSM 20081 / BCRC 10696 / JCM 1002 / NBRC 13953 / NCIMB 11778 / NCTC 12712 / WDCM 00102 / Lb 14</strain>
    </source>
</reference>
<name>SECA_LACDA</name>
<evidence type="ECO:0000255" key="1">
    <source>
        <dbReference type="HAMAP-Rule" id="MF_01382"/>
    </source>
</evidence>
<gene>
    <name evidence="1" type="primary">secA</name>
    <name type="ordered locus">Ldb0607</name>
</gene>
<comment type="function">
    <text evidence="1">Part of the Sec protein translocase complex. Interacts with the SecYEG preprotein conducting channel. Has a central role in coupling the hydrolysis of ATP to the transfer of proteins into and across the cell membrane, serving as an ATP-driven molecular motor driving the stepwise translocation of polypeptide chains across the membrane.</text>
</comment>
<comment type="catalytic activity">
    <reaction evidence="1">
        <text>ATP + H2O + cellular proteinSide 1 = ADP + phosphate + cellular proteinSide 2.</text>
        <dbReference type="EC" id="7.4.2.8"/>
    </reaction>
</comment>
<comment type="subunit">
    <text evidence="1">Monomer and homodimer. Part of the essential Sec protein translocation apparatus which comprises SecA, SecYEG and auxiliary proteins SecDF. Other proteins may also be involved.</text>
</comment>
<comment type="subcellular location">
    <subcellularLocation>
        <location evidence="1">Cell membrane</location>
        <topology evidence="1">Peripheral membrane protein</topology>
        <orientation evidence="1">Cytoplasmic side</orientation>
    </subcellularLocation>
    <subcellularLocation>
        <location evidence="1">Cytoplasm</location>
    </subcellularLocation>
    <text evidence="1">Distribution is 50-50.</text>
</comment>
<comment type="similarity">
    <text evidence="1">Belongs to the SecA family.</text>
</comment>
<accession>Q1GB45</accession>
<proteinExistence type="inferred from homology"/>